<organism>
    <name type="scientific">Beet necrotic yellow vein virus (isolate Japan/S)</name>
    <name type="common">BNYVV</name>
    <dbReference type="NCBI Taxonomy" id="652670"/>
    <lineage>
        <taxon>Viruses</taxon>
        <taxon>Riboviria</taxon>
        <taxon>Orthornavirae</taxon>
        <taxon>Kitrinoviricota</taxon>
        <taxon>Alsuviricetes</taxon>
        <taxon>Hepelivirales</taxon>
        <taxon>Benyviridae</taxon>
        <taxon>Benyvirus</taxon>
        <taxon>Beet necrotic yellow vein virus</taxon>
    </lineage>
</organism>
<accession>Q65669</accession>
<feature type="chain" id="PRO_0000409659" description="Protein P25">
    <location>
        <begin position="1"/>
        <end position="219"/>
    </location>
</feature>
<feature type="region of interest" description="Transcription activation" evidence="1">
    <location>
        <begin position="103"/>
        <end position="146"/>
    </location>
</feature>
<feature type="short sequence motif" description="Nuclear localization signal">
    <location>
        <begin position="57"/>
        <end position="62"/>
    </location>
</feature>
<feature type="short sequence motif" description="Nuclear export signal">
    <location>
        <begin position="169"/>
        <end position="178"/>
    </location>
</feature>
<dbReference type="EMBL" id="D84412">
    <property type="protein sequence ID" value="BAA12346.1"/>
    <property type="molecule type" value="Genomic_RNA"/>
</dbReference>
<dbReference type="RefSeq" id="NP_612621.1">
    <property type="nucleotide sequence ID" value="NC_003516.1"/>
</dbReference>
<dbReference type="GeneID" id="991089"/>
<dbReference type="KEGG" id="vg:991089"/>
<dbReference type="Proteomes" id="UP000001100">
    <property type="component" value="Genome"/>
</dbReference>
<dbReference type="GO" id="GO:0030430">
    <property type="term" value="C:host cell cytoplasm"/>
    <property type="evidence" value="ECO:0007669"/>
    <property type="project" value="UniProtKB-SubCell"/>
</dbReference>
<dbReference type="GO" id="GO:0042025">
    <property type="term" value="C:host cell nucleus"/>
    <property type="evidence" value="ECO:0007669"/>
    <property type="project" value="UniProtKB-SubCell"/>
</dbReference>
<dbReference type="InterPro" id="IPR008419">
    <property type="entry name" value="BNYVV_p25/p26"/>
</dbReference>
<dbReference type="Pfam" id="PF05744">
    <property type="entry name" value="Benyvirus_P25"/>
    <property type="match status" value="1"/>
</dbReference>
<proteinExistence type="evidence at protein level"/>
<protein>
    <recommendedName>
        <fullName>Protein P25</fullName>
    </recommendedName>
    <alternativeName>
        <fullName>25kDa protein</fullName>
    </alternativeName>
</protein>
<organismHost>
    <name type="scientific">Beta macrocarpa</name>
    <name type="common">Beet</name>
    <name type="synonym">Beta vulgaris subsp. macrocarpa</name>
    <dbReference type="NCBI Taxonomy" id="343494"/>
</organismHost>
<organismHost>
    <name type="scientific">Beta vulgaris</name>
    <name type="common">Sugar beet</name>
    <dbReference type="NCBI Taxonomy" id="161934"/>
</organismHost>
<organismHost>
    <name type="scientific">Spinacia oleracea</name>
    <name type="common">Spinach</name>
    <dbReference type="NCBI Taxonomy" id="3562"/>
</organismHost>
<sequence length="219" mass="24659">MGDILGAVYDLGHRPYLARRTVYEDRLILSTHGNVCRAINLLTHDNRTTLVYHNNTKRIRFRGLLCAYRVPYCGFRALCRVMLCSLPRLCDIPINGSRDFVADPTRLDSSVNELLVSNGLVTHYDRVHNVPIHTDGFEVVDFTTVFRGPGNFLLPNATNFPRSTTTDQVYMVCLVNTVNCVLRFESELVVWVHSGLYAGDVLDVDNNVIQAPDGVDDND</sequence>
<keyword id="KW-0010">Activator</keyword>
<keyword id="KW-1035">Host cytoplasm</keyword>
<keyword id="KW-1048">Host nucleus</keyword>
<keyword id="KW-1185">Reference proteome</keyword>
<reference key="1">
    <citation type="journal article" date="1996" name="Arch. Virol.">
        <title>Complete nucleotide sequence of the Japanese isolate S of beet necrotic yellow vein virus RNA and comparison with European isolates.</title>
        <authorList>
            <person name="Saito M."/>
            <person name="Kiguchi T."/>
            <person name="Kusume T."/>
            <person name="Tamada T."/>
        </authorList>
    </citation>
    <scope>NUCLEOTIDE SEQUENCE [GENOMIC RNA]</scope>
</reference>
<reference key="2">
    <citation type="journal article" date="2004" name="J. Gen. Virol.">
        <title>Nucleo-cytoplasmic shuttling of the beet necrotic yellow vein virus RNA-3-encoded p25 protein.</title>
        <authorList>
            <person name="Vetter G."/>
            <person name="Hily J.M."/>
            <person name="Klein E."/>
            <person name="Schmidlin L."/>
            <person name="Haas M."/>
            <person name="Merkle T."/>
            <person name="Gilmer D."/>
        </authorList>
    </citation>
    <scope>SUBCELLULAR LOCATION</scope>
</reference>
<reference key="3">
    <citation type="journal article" date="2007" name="Virus Res.">
        <title>Sequence variation within Beet necrotic yellow vein virus p25 protein influences its oligomerization and isolate pathogenicity on Tetragonia expansa.</title>
        <authorList>
            <person name="Klein E."/>
            <person name="Link D."/>
            <person name="Schirmer A."/>
            <person name="Erhardt M."/>
            <person name="Gilmer D."/>
        </authorList>
    </citation>
    <scope>FUNCTION</scope>
    <scope>SUBUNIT</scope>
</reference>
<comment type="function">
    <text evidence="3">Pathogenicity factor implicated in symptom exacerbation. Might function as transcription activator (Potential).</text>
</comment>
<comment type="subunit">
    <text evidence="4">Homooligomer.</text>
</comment>
<comment type="subcellular location">
    <subcellularLocation>
        <location evidence="2">Host cytoplasm</location>
    </subcellularLocation>
    <subcellularLocation>
        <location evidence="2">Host nucleus</location>
    </subcellularLocation>
    <text>Shuttles between cytoplasm and nucleus.</text>
</comment>
<comment type="similarity">
    <text evidence="3">Belongs to the benyvirus P25 protein family.</text>
</comment>
<evidence type="ECO:0000255" key="1"/>
<evidence type="ECO:0000269" key="2">
    <source>
    </source>
</evidence>
<evidence type="ECO:0000305" key="3"/>
<evidence type="ECO:0000305" key="4">
    <source>
    </source>
</evidence>
<name>P25_BNYVS</name>